<sequence length="205" mass="23158">MSEEVKNSVETEENKASKDNATQAPNPTENHNTAQETEKAENSEKTESATQENESLDKLKKDVTNYREQLLRTVADFENLKKQKEREVASVRKFADESLIKELLPVLDDIERVLVNASKFLQASPEAQSYVDGVKLIQQNMMKVFEARGLKRIEAVGTPFDVHLHEALSQMEKEGAEPDTVIQEFAPGYTLNDKVVRHSKVIVSK</sequence>
<dbReference type="EMBL" id="CP001100">
    <property type="protein sequence ID" value="ACF14280.1"/>
    <property type="molecule type" value="Genomic_DNA"/>
</dbReference>
<dbReference type="RefSeq" id="WP_012500364.1">
    <property type="nucleotide sequence ID" value="NC_011026.1"/>
</dbReference>
<dbReference type="SMR" id="B3QTT2"/>
<dbReference type="STRING" id="517418.Ctha_1823"/>
<dbReference type="KEGG" id="cts:Ctha_1823"/>
<dbReference type="eggNOG" id="COG0576">
    <property type="taxonomic scope" value="Bacteria"/>
</dbReference>
<dbReference type="HOGENOM" id="CLU_057217_5_2_10"/>
<dbReference type="OrthoDB" id="9812586at2"/>
<dbReference type="Proteomes" id="UP000001208">
    <property type="component" value="Chromosome"/>
</dbReference>
<dbReference type="GO" id="GO:0005737">
    <property type="term" value="C:cytoplasm"/>
    <property type="evidence" value="ECO:0007669"/>
    <property type="project" value="UniProtKB-SubCell"/>
</dbReference>
<dbReference type="GO" id="GO:0000774">
    <property type="term" value="F:adenyl-nucleotide exchange factor activity"/>
    <property type="evidence" value="ECO:0007669"/>
    <property type="project" value="InterPro"/>
</dbReference>
<dbReference type="GO" id="GO:0042803">
    <property type="term" value="F:protein homodimerization activity"/>
    <property type="evidence" value="ECO:0007669"/>
    <property type="project" value="InterPro"/>
</dbReference>
<dbReference type="GO" id="GO:0051087">
    <property type="term" value="F:protein-folding chaperone binding"/>
    <property type="evidence" value="ECO:0007669"/>
    <property type="project" value="InterPro"/>
</dbReference>
<dbReference type="GO" id="GO:0051082">
    <property type="term" value="F:unfolded protein binding"/>
    <property type="evidence" value="ECO:0007669"/>
    <property type="project" value="TreeGrafter"/>
</dbReference>
<dbReference type="GO" id="GO:0006457">
    <property type="term" value="P:protein folding"/>
    <property type="evidence" value="ECO:0007669"/>
    <property type="project" value="InterPro"/>
</dbReference>
<dbReference type="CDD" id="cd00446">
    <property type="entry name" value="GrpE"/>
    <property type="match status" value="1"/>
</dbReference>
<dbReference type="Gene3D" id="3.90.20.20">
    <property type="match status" value="1"/>
</dbReference>
<dbReference type="Gene3D" id="2.30.22.10">
    <property type="entry name" value="Head domain of nucleotide exchange factor GrpE"/>
    <property type="match status" value="1"/>
</dbReference>
<dbReference type="HAMAP" id="MF_01151">
    <property type="entry name" value="GrpE"/>
    <property type="match status" value="1"/>
</dbReference>
<dbReference type="InterPro" id="IPR000740">
    <property type="entry name" value="GrpE"/>
</dbReference>
<dbReference type="InterPro" id="IPR013805">
    <property type="entry name" value="GrpE_coiled_coil"/>
</dbReference>
<dbReference type="InterPro" id="IPR009012">
    <property type="entry name" value="GrpE_head"/>
</dbReference>
<dbReference type="PANTHER" id="PTHR21237">
    <property type="entry name" value="GRPE PROTEIN"/>
    <property type="match status" value="1"/>
</dbReference>
<dbReference type="PANTHER" id="PTHR21237:SF23">
    <property type="entry name" value="GRPE PROTEIN HOMOLOG, MITOCHONDRIAL"/>
    <property type="match status" value="1"/>
</dbReference>
<dbReference type="Pfam" id="PF01025">
    <property type="entry name" value="GrpE"/>
    <property type="match status" value="1"/>
</dbReference>
<dbReference type="PRINTS" id="PR00773">
    <property type="entry name" value="GRPEPROTEIN"/>
</dbReference>
<dbReference type="SUPFAM" id="SSF58014">
    <property type="entry name" value="Coiled-coil domain of nucleotide exchange factor GrpE"/>
    <property type="match status" value="1"/>
</dbReference>
<dbReference type="SUPFAM" id="SSF51064">
    <property type="entry name" value="Head domain of nucleotide exchange factor GrpE"/>
    <property type="match status" value="1"/>
</dbReference>
<dbReference type="PROSITE" id="PS01071">
    <property type="entry name" value="GRPE"/>
    <property type="match status" value="1"/>
</dbReference>
<gene>
    <name evidence="1" type="primary">grpE</name>
    <name type="ordered locus">Ctha_1823</name>
</gene>
<feature type="chain" id="PRO_1000137556" description="Protein GrpE">
    <location>
        <begin position="1"/>
        <end position="205"/>
    </location>
</feature>
<feature type="region of interest" description="Disordered" evidence="2">
    <location>
        <begin position="1"/>
        <end position="60"/>
    </location>
</feature>
<feature type="compositionally biased region" description="Basic and acidic residues" evidence="2">
    <location>
        <begin position="1"/>
        <end position="18"/>
    </location>
</feature>
<feature type="compositionally biased region" description="Polar residues" evidence="2">
    <location>
        <begin position="19"/>
        <end position="35"/>
    </location>
</feature>
<feature type="compositionally biased region" description="Basic and acidic residues" evidence="2">
    <location>
        <begin position="36"/>
        <end position="47"/>
    </location>
</feature>
<name>GRPE_CHLT3</name>
<proteinExistence type="inferred from homology"/>
<organism>
    <name type="scientific">Chloroherpeton thalassium (strain ATCC 35110 / GB-78)</name>
    <dbReference type="NCBI Taxonomy" id="517418"/>
    <lineage>
        <taxon>Bacteria</taxon>
        <taxon>Pseudomonadati</taxon>
        <taxon>Chlorobiota</taxon>
        <taxon>Chlorobiia</taxon>
        <taxon>Chlorobiales</taxon>
        <taxon>Chloroherpetonaceae</taxon>
        <taxon>Chloroherpeton</taxon>
    </lineage>
</organism>
<comment type="function">
    <text evidence="1">Participates actively in the response to hyperosmotic and heat shock by preventing the aggregation of stress-denatured proteins, in association with DnaK and GrpE. It is the nucleotide exchange factor for DnaK and may function as a thermosensor. Unfolded proteins bind initially to DnaJ; upon interaction with the DnaJ-bound protein, DnaK hydrolyzes its bound ATP, resulting in the formation of a stable complex. GrpE releases ADP from DnaK; ATP binding to DnaK triggers the release of the substrate protein, thus completing the reaction cycle. Several rounds of ATP-dependent interactions between DnaJ, DnaK and GrpE are required for fully efficient folding.</text>
</comment>
<comment type="subunit">
    <text evidence="1">Homodimer.</text>
</comment>
<comment type="subcellular location">
    <subcellularLocation>
        <location evidence="1">Cytoplasm</location>
    </subcellularLocation>
</comment>
<comment type="similarity">
    <text evidence="1">Belongs to the GrpE family.</text>
</comment>
<evidence type="ECO:0000255" key="1">
    <source>
        <dbReference type="HAMAP-Rule" id="MF_01151"/>
    </source>
</evidence>
<evidence type="ECO:0000256" key="2">
    <source>
        <dbReference type="SAM" id="MobiDB-lite"/>
    </source>
</evidence>
<protein>
    <recommendedName>
        <fullName evidence="1">Protein GrpE</fullName>
    </recommendedName>
    <alternativeName>
        <fullName evidence="1">HSP-70 cofactor</fullName>
    </alternativeName>
</protein>
<keyword id="KW-0143">Chaperone</keyword>
<keyword id="KW-0963">Cytoplasm</keyword>
<keyword id="KW-1185">Reference proteome</keyword>
<keyword id="KW-0346">Stress response</keyword>
<accession>B3QTT2</accession>
<reference key="1">
    <citation type="submission" date="2008-06" db="EMBL/GenBank/DDBJ databases">
        <title>Complete sequence of Chloroherpeton thalassium ATCC 35110.</title>
        <authorList>
            <consortium name="US DOE Joint Genome Institute"/>
            <person name="Lucas S."/>
            <person name="Copeland A."/>
            <person name="Lapidus A."/>
            <person name="Glavina del Rio T."/>
            <person name="Dalin E."/>
            <person name="Tice H."/>
            <person name="Bruce D."/>
            <person name="Goodwin L."/>
            <person name="Pitluck S."/>
            <person name="Schmutz J."/>
            <person name="Larimer F."/>
            <person name="Land M."/>
            <person name="Hauser L."/>
            <person name="Kyrpides N."/>
            <person name="Mikhailova N."/>
            <person name="Liu Z."/>
            <person name="Li T."/>
            <person name="Zhao F."/>
            <person name="Overmann J."/>
            <person name="Bryant D.A."/>
            <person name="Richardson P."/>
        </authorList>
    </citation>
    <scope>NUCLEOTIDE SEQUENCE [LARGE SCALE GENOMIC DNA]</scope>
    <source>
        <strain>ATCC 35110 / GB-78</strain>
    </source>
</reference>